<feature type="chain" id="PRO_0000336334" description="Imidazoleglycerol-phosphate dehydratase">
    <location>
        <begin position="1"/>
        <end position="200"/>
    </location>
</feature>
<sequence>MAEQEEKQTRRATAARKTQETDITISISLDGTGSSSIESGIGFLDHMLTSFSRHSGIDITLQCQGDLVVDDHHTVEDIAIVLGGAITEALGEKRGIRRYGWAMIPMDEALARCAVDLGGRSCSVFRAEFSRPLIEGLSTEMVEHFFTSLAGSMNANIHIAILEGRNTHHKIEAIFKAFAYAMKDAIKVEGNAVPSTKGVF</sequence>
<evidence type="ECO:0000255" key="1">
    <source>
        <dbReference type="HAMAP-Rule" id="MF_00076"/>
    </source>
</evidence>
<name>HIS7_CHLPM</name>
<reference key="1">
    <citation type="submission" date="2007-03" db="EMBL/GenBank/DDBJ databases">
        <title>Complete sequence of Prosthecochloris vibrioformis DSM 265.</title>
        <authorList>
            <consortium name="US DOE Joint Genome Institute"/>
            <person name="Copeland A."/>
            <person name="Lucas S."/>
            <person name="Lapidus A."/>
            <person name="Barry K."/>
            <person name="Detter J.C."/>
            <person name="Glavina del Rio T."/>
            <person name="Hammon N."/>
            <person name="Israni S."/>
            <person name="Pitluck S."/>
            <person name="Schmutz J."/>
            <person name="Larimer F."/>
            <person name="Land M."/>
            <person name="Hauser L."/>
            <person name="Mikhailova N."/>
            <person name="Li T."/>
            <person name="Overmann J."/>
            <person name="Schuster S.C."/>
            <person name="Bryant D.A."/>
            <person name="Richardson P."/>
        </authorList>
    </citation>
    <scope>NUCLEOTIDE SEQUENCE [LARGE SCALE GENOMIC DNA]</scope>
    <source>
        <strain>DSM 265 / 1930</strain>
    </source>
</reference>
<keyword id="KW-0028">Amino-acid biosynthesis</keyword>
<keyword id="KW-0963">Cytoplasm</keyword>
<keyword id="KW-0368">Histidine biosynthesis</keyword>
<keyword id="KW-0456">Lyase</keyword>
<organism>
    <name type="scientific">Chlorobium phaeovibrioides (strain DSM 265 / 1930)</name>
    <name type="common">Prosthecochloris vibrioformis (strain DSM 265)</name>
    <dbReference type="NCBI Taxonomy" id="290318"/>
    <lineage>
        <taxon>Bacteria</taxon>
        <taxon>Pseudomonadati</taxon>
        <taxon>Chlorobiota</taxon>
        <taxon>Chlorobiia</taxon>
        <taxon>Chlorobiales</taxon>
        <taxon>Chlorobiaceae</taxon>
        <taxon>Chlorobium/Pelodictyon group</taxon>
        <taxon>Chlorobium</taxon>
    </lineage>
</organism>
<comment type="catalytic activity">
    <reaction evidence="1">
        <text>D-erythro-1-(imidazol-4-yl)glycerol 3-phosphate = 3-(imidazol-4-yl)-2-oxopropyl phosphate + H2O</text>
        <dbReference type="Rhea" id="RHEA:11040"/>
        <dbReference type="ChEBI" id="CHEBI:15377"/>
        <dbReference type="ChEBI" id="CHEBI:57766"/>
        <dbReference type="ChEBI" id="CHEBI:58278"/>
        <dbReference type="EC" id="4.2.1.19"/>
    </reaction>
</comment>
<comment type="pathway">
    <text evidence="1">Amino-acid biosynthesis; L-histidine biosynthesis; L-histidine from 5-phospho-alpha-D-ribose 1-diphosphate: step 6/9.</text>
</comment>
<comment type="subcellular location">
    <subcellularLocation>
        <location evidence="1">Cytoplasm</location>
    </subcellularLocation>
</comment>
<comment type="similarity">
    <text evidence="1">Belongs to the imidazoleglycerol-phosphate dehydratase family.</text>
</comment>
<proteinExistence type="inferred from homology"/>
<accession>A4SF66</accession>
<gene>
    <name evidence="1" type="primary">hisB</name>
    <name type="ordered locus">Cvib_1111</name>
</gene>
<protein>
    <recommendedName>
        <fullName evidence="1">Imidazoleglycerol-phosphate dehydratase</fullName>
        <shortName evidence="1">IGPD</shortName>
        <ecNumber evidence="1">4.2.1.19</ecNumber>
    </recommendedName>
</protein>
<dbReference type="EC" id="4.2.1.19" evidence="1"/>
<dbReference type="EMBL" id="CP000607">
    <property type="protein sequence ID" value="ABP37125.1"/>
    <property type="molecule type" value="Genomic_DNA"/>
</dbReference>
<dbReference type="SMR" id="A4SF66"/>
<dbReference type="STRING" id="290318.Cvib_1111"/>
<dbReference type="KEGG" id="pvi:Cvib_1111"/>
<dbReference type="eggNOG" id="COG0131">
    <property type="taxonomic scope" value="Bacteria"/>
</dbReference>
<dbReference type="HOGENOM" id="CLU_044308_3_0_10"/>
<dbReference type="OrthoDB" id="9790411at2"/>
<dbReference type="UniPathway" id="UPA00031">
    <property type="reaction ID" value="UER00011"/>
</dbReference>
<dbReference type="GO" id="GO:0005737">
    <property type="term" value="C:cytoplasm"/>
    <property type="evidence" value="ECO:0007669"/>
    <property type="project" value="UniProtKB-SubCell"/>
</dbReference>
<dbReference type="GO" id="GO:0004424">
    <property type="term" value="F:imidazoleglycerol-phosphate dehydratase activity"/>
    <property type="evidence" value="ECO:0007669"/>
    <property type="project" value="UniProtKB-UniRule"/>
</dbReference>
<dbReference type="GO" id="GO:0000105">
    <property type="term" value="P:L-histidine biosynthetic process"/>
    <property type="evidence" value="ECO:0007669"/>
    <property type="project" value="UniProtKB-UniRule"/>
</dbReference>
<dbReference type="CDD" id="cd07914">
    <property type="entry name" value="IGPD"/>
    <property type="match status" value="1"/>
</dbReference>
<dbReference type="FunFam" id="3.30.230.40:FF:000001">
    <property type="entry name" value="Imidazoleglycerol-phosphate dehydratase HisB"/>
    <property type="match status" value="1"/>
</dbReference>
<dbReference type="FunFam" id="3.30.230.40:FF:000003">
    <property type="entry name" value="Imidazoleglycerol-phosphate dehydratase HisB"/>
    <property type="match status" value="1"/>
</dbReference>
<dbReference type="Gene3D" id="3.30.230.40">
    <property type="entry name" value="Imidazole glycerol phosphate dehydratase, domain 1"/>
    <property type="match status" value="2"/>
</dbReference>
<dbReference type="HAMAP" id="MF_00076">
    <property type="entry name" value="HisB"/>
    <property type="match status" value="1"/>
</dbReference>
<dbReference type="InterPro" id="IPR038494">
    <property type="entry name" value="IGPD_sf"/>
</dbReference>
<dbReference type="InterPro" id="IPR000807">
    <property type="entry name" value="ImidazoleglycerolP_deHydtase"/>
</dbReference>
<dbReference type="InterPro" id="IPR020565">
    <property type="entry name" value="ImidazoleglycerP_deHydtase_CS"/>
</dbReference>
<dbReference type="InterPro" id="IPR020568">
    <property type="entry name" value="Ribosomal_Su5_D2-typ_SF"/>
</dbReference>
<dbReference type="NCBIfam" id="NF002111">
    <property type="entry name" value="PRK00951.2-1"/>
    <property type="match status" value="1"/>
</dbReference>
<dbReference type="NCBIfam" id="NF002114">
    <property type="entry name" value="PRK00951.2-4"/>
    <property type="match status" value="1"/>
</dbReference>
<dbReference type="PANTHER" id="PTHR23133:SF2">
    <property type="entry name" value="IMIDAZOLEGLYCEROL-PHOSPHATE DEHYDRATASE"/>
    <property type="match status" value="1"/>
</dbReference>
<dbReference type="PANTHER" id="PTHR23133">
    <property type="entry name" value="IMIDAZOLEGLYCEROL-PHOSPHATE DEHYDRATASE HIS7"/>
    <property type="match status" value="1"/>
</dbReference>
<dbReference type="Pfam" id="PF00475">
    <property type="entry name" value="IGPD"/>
    <property type="match status" value="1"/>
</dbReference>
<dbReference type="SUPFAM" id="SSF54211">
    <property type="entry name" value="Ribosomal protein S5 domain 2-like"/>
    <property type="match status" value="2"/>
</dbReference>
<dbReference type="PROSITE" id="PS00954">
    <property type="entry name" value="IGP_DEHYDRATASE_1"/>
    <property type="match status" value="1"/>
</dbReference>
<dbReference type="PROSITE" id="PS00955">
    <property type="entry name" value="IGP_DEHYDRATASE_2"/>
    <property type="match status" value="1"/>
</dbReference>